<proteinExistence type="inferred from homology"/>
<gene>
    <name evidence="1" type="primary">ybeY</name>
    <name type="ordered locus">A1S_3031</name>
</gene>
<protein>
    <recommendedName>
        <fullName evidence="1">Endoribonuclease YbeY</fullName>
        <ecNumber evidence="1">3.1.-.-</ecNumber>
    </recommendedName>
</protein>
<dbReference type="EC" id="3.1.-.-" evidence="1"/>
<dbReference type="EMBL" id="CP000521">
    <property type="protein sequence ID" value="ABO13428.2"/>
    <property type="molecule type" value="Genomic_DNA"/>
</dbReference>
<dbReference type="RefSeq" id="WP_000703571.1">
    <property type="nucleotide sequence ID" value="NZ_CP053098.1"/>
</dbReference>
<dbReference type="SMR" id="A3M934"/>
<dbReference type="GeneID" id="92895262"/>
<dbReference type="KEGG" id="acb:A1S_3031"/>
<dbReference type="HOGENOM" id="CLU_106710_0_1_6"/>
<dbReference type="GO" id="GO:0005737">
    <property type="term" value="C:cytoplasm"/>
    <property type="evidence" value="ECO:0007669"/>
    <property type="project" value="UniProtKB-SubCell"/>
</dbReference>
<dbReference type="GO" id="GO:0004222">
    <property type="term" value="F:metalloendopeptidase activity"/>
    <property type="evidence" value="ECO:0007669"/>
    <property type="project" value="InterPro"/>
</dbReference>
<dbReference type="GO" id="GO:0004521">
    <property type="term" value="F:RNA endonuclease activity"/>
    <property type="evidence" value="ECO:0007669"/>
    <property type="project" value="UniProtKB-UniRule"/>
</dbReference>
<dbReference type="GO" id="GO:0008270">
    <property type="term" value="F:zinc ion binding"/>
    <property type="evidence" value="ECO:0007669"/>
    <property type="project" value="UniProtKB-UniRule"/>
</dbReference>
<dbReference type="GO" id="GO:0006364">
    <property type="term" value="P:rRNA processing"/>
    <property type="evidence" value="ECO:0007669"/>
    <property type="project" value="UniProtKB-UniRule"/>
</dbReference>
<dbReference type="Gene3D" id="3.40.390.30">
    <property type="entry name" value="Metalloproteases ('zincins'), catalytic domain"/>
    <property type="match status" value="1"/>
</dbReference>
<dbReference type="HAMAP" id="MF_00009">
    <property type="entry name" value="Endoribonucl_YbeY"/>
    <property type="match status" value="1"/>
</dbReference>
<dbReference type="InterPro" id="IPR023091">
    <property type="entry name" value="MetalPrtase_cat_dom_sf_prd"/>
</dbReference>
<dbReference type="InterPro" id="IPR002036">
    <property type="entry name" value="YbeY"/>
</dbReference>
<dbReference type="InterPro" id="IPR020549">
    <property type="entry name" value="YbeY_CS"/>
</dbReference>
<dbReference type="NCBIfam" id="TIGR00043">
    <property type="entry name" value="rRNA maturation RNase YbeY"/>
    <property type="match status" value="1"/>
</dbReference>
<dbReference type="PANTHER" id="PTHR46986">
    <property type="entry name" value="ENDORIBONUCLEASE YBEY, CHLOROPLASTIC"/>
    <property type="match status" value="1"/>
</dbReference>
<dbReference type="PANTHER" id="PTHR46986:SF1">
    <property type="entry name" value="ENDORIBONUCLEASE YBEY, CHLOROPLASTIC"/>
    <property type="match status" value="1"/>
</dbReference>
<dbReference type="Pfam" id="PF02130">
    <property type="entry name" value="YbeY"/>
    <property type="match status" value="1"/>
</dbReference>
<dbReference type="SUPFAM" id="SSF55486">
    <property type="entry name" value="Metalloproteases ('zincins'), catalytic domain"/>
    <property type="match status" value="1"/>
</dbReference>
<dbReference type="PROSITE" id="PS01306">
    <property type="entry name" value="UPF0054"/>
    <property type="match status" value="1"/>
</dbReference>
<feature type="chain" id="PRO_1000089143" description="Endoribonuclease YbeY">
    <location>
        <begin position="1"/>
        <end position="158"/>
    </location>
</feature>
<feature type="binding site" evidence="1">
    <location>
        <position position="119"/>
    </location>
    <ligand>
        <name>Zn(2+)</name>
        <dbReference type="ChEBI" id="CHEBI:29105"/>
        <note>catalytic</note>
    </ligand>
</feature>
<feature type="binding site" evidence="1">
    <location>
        <position position="123"/>
    </location>
    <ligand>
        <name>Zn(2+)</name>
        <dbReference type="ChEBI" id="CHEBI:29105"/>
        <note>catalytic</note>
    </ligand>
</feature>
<feature type="binding site" evidence="1">
    <location>
        <position position="129"/>
    </location>
    <ligand>
        <name>Zn(2+)</name>
        <dbReference type="ChEBI" id="CHEBI:29105"/>
        <note>catalytic</note>
    </ligand>
</feature>
<comment type="function">
    <text evidence="1">Single strand-specific metallo-endoribonuclease involved in late-stage 70S ribosome quality control and in maturation of the 3' terminus of the 16S rRNA.</text>
</comment>
<comment type="cofactor">
    <cofactor evidence="1">
        <name>Zn(2+)</name>
        <dbReference type="ChEBI" id="CHEBI:29105"/>
    </cofactor>
    <text evidence="1">Binds 1 zinc ion.</text>
</comment>
<comment type="subcellular location">
    <subcellularLocation>
        <location evidence="1">Cytoplasm</location>
    </subcellularLocation>
</comment>
<comment type="similarity">
    <text evidence="1">Belongs to the endoribonuclease YbeY family.</text>
</comment>
<organism>
    <name type="scientific">Acinetobacter baumannii (strain ATCC 17978 / DSM 105126 / CIP 53.77 / LMG 1025 / NCDC KC755 / 5377)</name>
    <dbReference type="NCBI Taxonomy" id="400667"/>
    <lineage>
        <taxon>Bacteria</taxon>
        <taxon>Pseudomonadati</taxon>
        <taxon>Pseudomonadota</taxon>
        <taxon>Gammaproteobacteria</taxon>
        <taxon>Moraxellales</taxon>
        <taxon>Moraxellaceae</taxon>
        <taxon>Acinetobacter</taxon>
        <taxon>Acinetobacter calcoaceticus/baumannii complex</taxon>
    </lineage>
</organism>
<evidence type="ECO:0000255" key="1">
    <source>
        <dbReference type="HAMAP-Rule" id="MF_00009"/>
    </source>
</evidence>
<reference key="1">
    <citation type="journal article" date="2007" name="Genes Dev.">
        <title>New insights into Acinetobacter baumannii pathogenesis revealed by high-density pyrosequencing and transposon mutagenesis.</title>
        <authorList>
            <person name="Smith M.G."/>
            <person name="Gianoulis T.A."/>
            <person name="Pukatzki S."/>
            <person name="Mekalanos J.J."/>
            <person name="Ornston L.N."/>
            <person name="Gerstein M."/>
            <person name="Snyder M."/>
        </authorList>
    </citation>
    <scope>NUCLEOTIDE SEQUENCE [LARGE SCALE GENOMIC DNA]</scope>
    <source>
        <strain>ATCC 17978 / DSM 105126 / CIP 53.77 / LMG 1025 / NCDC KC755 / 5377</strain>
    </source>
</reference>
<keyword id="KW-0963">Cytoplasm</keyword>
<keyword id="KW-0255">Endonuclease</keyword>
<keyword id="KW-0378">Hydrolase</keyword>
<keyword id="KW-0479">Metal-binding</keyword>
<keyword id="KW-0540">Nuclease</keyword>
<keyword id="KW-0690">Ribosome biogenesis</keyword>
<keyword id="KW-0698">rRNA processing</keyword>
<keyword id="KW-0862">Zinc</keyword>
<accession>A3M934</accession>
<name>YBEY_ACIBT</name>
<sequence>MKISLSLQQDFQSPELELKRAQLKKIIETTLRHVGYKEDCEIGIACVDLEESHQLNLQYREKDKPTNVLSFPSDIPEEVLPMLDALPLGDLVICIPVVLQEALEQKKTAQNHFAHLLVHGVLHLLGYDHETSDEDAEEMEGLEIEILAKLNIANPYQE</sequence>